<dbReference type="EMBL" id="CP000377">
    <property type="protein sequence ID" value="ABF62965.1"/>
    <property type="molecule type" value="Genomic_DNA"/>
</dbReference>
<dbReference type="RefSeq" id="WP_011537597.1">
    <property type="nucleotide sequence ID" value="NC_008044.1"/>
</dbReference>
<dbReference type="SMR" id="Q1GK51"/>
<dbReference type="STRING" id="292414.TM1040_0232"/>
<dbReference type="KEGG" id="sit:TM1040_0232"/>
<dbReference type="eggNOG" id="COG0244">
    <property type="taxonomic scope" value="Bacteria"/>
</dbReference>
<dbReference type="HOGENOM" id="CLU_092227_0_0_5"/>
<dbReference type="OrthoDB" id="9791972at2"/>
<dbReference type="Proteomes" id="UP000000636">
    <property type="component" value="Chromosome"/>
</dbReference>
<dbReference type="GO" id="GO:0015934">
    <property type="term" value="C:large ribosomal subunit"/>
    <property type="evidence" value="ECO:0007669"/>
    <property type="project" value="InterPro"/>
</dbReference>
<dbReference type="GO" id="GO:0070180">
    <property type="term" value="F:large ribosomal subunit rRNA binding"/>
    <property type="evidence" value="ECO:0007669"/>
    <property type="project" value="UniProtKB-UniRule"/>
</dbReference>
<dbReference type="GO" id="GO:0003735">
    <property type="term" value="F:structural constituent of ribosome"/>
    <property type="evidence" value="ECO:0007669"/>
    <property type="project" value="InterPro"/>
</dbReference>
<dbReference type="GO" id="GO:0006412">
    <property type="term" value="P:translation"/>
    <property type="evidence" value="ECO:0007669"/>
    <property type="project" value="UniProtKB-UniRule"/>
</dbReference>
<dbReference type="CDD" id="cd05797">
    <property type="entry name" value="Ribosomal_L10"/>
    <property type="match status" value="1"/>
</dbReference>
<dbReference type="Gene3D" id="3.30.70.1730">
    <property type="match status" value="1"/>
</dbReference>
<dbReference type="Gene3D" id="6.10.250.290">
    <property type="match status" value="1"/>
</dbReference>
<dbReference type="HAMAP" id="MF_00362">
    <property type="entry name" value="Ribosomal_uL10"/>
    <property type="match status" value="1"/>
</dbReference>
<dbReference type="InterPro" id="IPR001790">
    <property type="entry name" value="Ribosomal_uL10"/>
</dbReference>
<dbReference type="InterPro" id="IPR043141">
    <property type="entry name" value="Ribosomal_uL10-like_sf"/>
</dbReference>
<dbReference type="InterPro" id="IPR022973">
    <property type="entry name" value="Ribosomal_uL10_bac"/>
</dbReference>
<dbReference type="InterPro" id="IPR047865">
    <property type="entry name" value="Ribosomal_uL10_bac_type"/>
</dbReference>
<dbReference type="InterPro" id="IPR002363">
    <property type="entry name" value="Ribosomal_uL10_CS_bac"/>
</dbReference>
<dbReference type="NCBIfam" id="NF000955">
    <property type="entry name" value="PRK00099.1-1"/>
    <property type="match status" value="1"/>
</dbReference>
<dbReference type="PANTHER" id="PTHR11560">
    <property type="entry name" value="39S RIBOSOMAL PROTEIN L10, MITOCHONDRIAL"/>
    <property type="match status" value="1"/>
</dbReference>
<dbReference type="Pfam" id="PF00466">
    <property type="entry name" value="Ribosomal_L10"/>
    <property type="match status" value="1"/>
</dbReference>
<dbReference type="SUPFAM" id="SSF160369">
    <property type="entry name" value="Ribosomal protein L10-like"/>
    <property type="match status" value="1"/>
</dbReference>
<dbReference type="PROSITE" id="PS01109">
    <property type="entry name" value="RIBOSOMAL_L10"/>
    <property type="match status" value="1"/>
</dbReference>
<reference key="1">
    <citation type="submission" date="2006-05" db="EMBL/GenBank/DDBJ databases">
        <title>Complete sequence of chromosome of Silicibacter sp. TM1040.</title>
        <authorList>
            <consortium name="US DOE Joint Genome Institute"/>
            <person name="Copeland A."/>
            <person name="Lucas S."/>
            <person name="Lapidus A."/>
            <person name="Barry K."/>
            <person name="Detter J.C."/>
            <person name="Glavina del Rio T."/>
            <person name="Hammon N."/>
            <person name="Israni S."/>
            <person name="Dalin E."/>
            <person name="Tice H."/>
            <person name="Pitluck S."/>
            <person name="Brettin T."/>
            <person name="Bruce D."/>
            <person name="Han C."/>
            <person name="Tapia R."/>
            <person name="Goodwin L."/>
            <person name="Thompson L.S."/>
            <person name="Gilna P."/>
            <person name="Schmutz J."/>
            <person name="Larimer F."/>
            <person name="Land M."/>
            <person name="Hauser L."/>
            <person name="Kyrpides N."/>
            <person name="Kim E."/>
            <person name="Belas R."/>
            <person name="Moran M.A."/>
            <person name="Buchan A."/>
            <person name="Gonzalez J.M."/>
            <person name="Schell M.A."/>
            <person name="Sun F."/>
            <person name="Richardson P."/>
        </authorList>
    </citation>
    <scope>NUCLEOTIDE SEQUENCE [LARGE SCALE GENOMIC DNA]</scope>
    <source>
        <strain>TM1040</strain>
    </source>
</reference>
<gene>
    <name evidence="1" type="primary">rplJ</name>
    <name type="ordered locus">TM1040_0232</name>
</gene>
<organism>
    <name type="scientific">Ruegeria sp. (strain TM1040)</name>
    <name type="common">Silicibacter sp.</name>
    <dbReference type="NCBI Taxonomy" id="292414"/>
    <lineage>
        <taxon>Bacteria</taxon>
        <taxon>Pseudomonadati</taxon>
        <taxon>Pseudomonadota</taxon>
        <taxon>Alphaproteobacteria</taxon>
        <taxon>Rhodobacterales</taxon>
        <taxon>Roseobacteraceae</taxon>
        <taxon>Ruegeria</taxon>
    </lineage>
</organism>
<feature type="chain" id="PRO_1000005599" description="Large ribosomal subunit protein uL10">
    <location>
        <begin position="1"/>
        <end position="172"/>
    </location>
</feature>
<keyword id="KW-1185">Reference proteome</keyword>
<keyword id="KW-0687">Ribonucleoprotein</keyword>
<keyword id="KW-0689">Ribosomal protein</keyword>
<keyword id="KW-0694">RNA-binding</keyword>
<keyword id="KW-0699">rRNA-binding</keyword>
<accession>Q1GK51</accession>
<protein>
    <recommendedName>
        <fullName evidence="1">Large ribosomal subunit protein uL10</fullName>
    </recommendedName>
    <alternativeName>
        <fullName evidence="2">50S ribosomal protein L10</fullName>
    </alternativeName>
</protein>
<evidence type="ECO:0000255" key="1">
    <source>
        <dbReference type="HAMAP-Rule" id="MF_00362"/>
    </source>
</evidence>
<evidence type="ECO:0000305" key="2"/>
<name>RL10_RUEST</name>
<sequence>MDRAQKEKVVEELGQIFESSGVVVVAHYTGLTVSEMQDLRARARDAGGSVRVAKNRLAKIALEGKPCESMSDLLTGMTVLTYSEDPVAAAKVAEDFAKENKKFEILGGAMGENALDRAGVEAVSKMPSREELIASIVGCIGAPASNIAGAIGAPASNIASILSTIEEKAEAA</sequence>
<proteinExistence type="inferred from homology"/>
<comment type="function">
    <text evidence="1">Forms part of the ribosomal stalk, playing a central role in the interaction of the ribosome with GTP-bound translation factors.</text>
</comment>
<comment type="subunit">
    <text evidence="1">Part of the ribosomal stalk of the 50S ribosomal subunit. The N-terminus interacts with L11 and the large rRNA to form the base of the stalk. The C-terminus forms an elongated spine to which L12 dimers bind in a sequential fashion forming a multimeric L10(L12)X complex.</text>
</comment>
<comment type="similarity">
    <text evidence="1">Belongs to the universal ribosomal protein uL10 family.</text>
</comment>